<feature type="chain" id="PRO_0000210270" description="Syntaxin pep12">
    <location>
        <begin position="1"/>
        <end position="263"/>
    </location>
</feature>
<feature type="domain" description="t-SNARE coiled-coil homology" evidence="1">
    <location>
        <begin position="169"/>
        <end position="231"/>
    </location>
</feature>
<feature type="region of interest" description="Disordered" evidence="2">
    <location>
        <begin position="140"/>
        <end position="159"/>
    </location>
</feature>
<feature type="compositionally biased region" description="Polar residues" evidence="2">
    <location>
        <begin position="142"/>
        <end position="159"/>
    </location>
</feature>
<feature type="modified residue" description="Phosphoserine" evidence="5">
    <location>
        <position position="148"/>
    </location>
</feature>
<feature type="modified residue" description="Phosphoserine" evidence="5">
    <location>
        <position position="163"/>
    </location>
</feature>
<sequence>MSFVDLEQGRHKIEQNGDFPALASSIAQEIHALRGNTAAIHRYLVNNLTKNLHEVLEQSRELSQKVRSDLVRLANIKDTKYGEEASSFALSKLTRDFNTVLAELQRVQQKCAQQESDSVAAAQAALNQDVGQHFIEEEERNVSLSNNSSGQRQPLTESKISNSQLEYQQRLINERQGEIENLTQGINELNEIFRDLSTIINEQGELVTNIEYNVGNTSTNTKNASRQLQIANEHSRKARKRSFCFLVILVVILGVILTALIMG</sequence>
<protein>
    <recommendedName>
        <fullName>Syntaxin pep12</fullName>
    </recommendedName>
</protein>
<organism>
    <name type="scientific">Schizosaccharomyces pombe (strain 972 / ATCC 24843)</name>
    <name type="common">Fission yeast</name>
    <dbReference type="NCBI Taxonomy" id="284812"/>
    <lineage>
        <taxon>Eukaryota</taxon>
        <taxon>Fungi</taxon>
        <taxon>Dikarya</taxon>
        <taxon>Ascomycota</taxon>
        <taxon>Taphrinomycotina</taxon>
        <taxon>Schizosaccharomycetes</taxon>
        <taxon>Schizosaccharomycetales</taxon>
        <taxon>Schizosaccharomycetaceae</taxon>
        <taxon>Schizosaccharomyces</taxon>
    </lineage>
</organism>
<comment type="function">
    <text evidence="3">Has a role in vesicle-mediated transport but not with protein transport from Golgi to vesicle.</text>
</comment>
<comment type="subcellular location">
    <subcellularLocation>
        <location evidence="4">Endoplasmic reticulum</location>
    </subcellularLocation>
</comment>
<comment type="similarity">
    <text evidence="6">Belongs to the syntaxin family.</text>
</comment>
<evidence type="ECO:0000255" key="1">
    <source>
        <dbReference type="PROSITE-ProRule" id="PRU00202"/>
    </source>
</evidence>
<evidence type="ECO:0000256" key="2">
    <source>
        <dbReference type="SAM" id="MobiDB-lite"/>
    </source>
</evidence>
<evidence type="ECO:0000269" key="3">
    <source>
    </source>
</evidence>
<evidence type="ECO:0000269" key="4">
    <source>
    </source>
</evidence>
<evidence type="ECO:0000269" key="5">
    <source>
    </source>
</evidence>
<evidence type="ECO:0000305" key="6"/>
<keyword id="KW-0256">Endoplasmic reticulum</keyword>
<keyword id="KW-0597">Phosphoprotein</keyword>
<keyword id="KW-0653">Protein transport</keyword>
<keyword id="KW-1185">Reference proteome</keyword>
<keyword id="KW-0813">Transport</keyword>
<gene>
    <name type="primary">pep12</name>
    <name type="ORF">SPBC31E1.04</name>
</gene>
<reference key="1">
    <citation type="journal article" date="2002" name="Nature">
        <title>The genome sequence of Schizosaccharomyces pombe.</title>
        <authorList>
            <person name="Wood V."/>
            <person name="Gwilliam R."/>
            <person name="Rajandream M.A."/>
            <person name="Lyne M.H."/>
            <person name="Lyne R."/>
            <person name="Stewart A."/>
            <person name="Sgouros J.G."/>
            <person name="Peat N."/>
            <person name="Hayles J."/>
            <person name="Baker S.G."/>
            <person name="Basham D."/>
            <person name="Bowman S."/>
            <person name="Brooks K."/>
            <person name="Brown D."/>
            <person name="Brown S."/>
            <person name="Chillingworth T."/>
            <person name="Churcher C.M."/>
            <person name="Collins M."/>
            <person name="Connor R."/>
            <person name="Cronin A."/>
            <person name="Davis P."/>
            <person name="Feltwell T."/>
            <person name="Fraser A."/>
            <person name="Gentles S."/>
            <person name="Goble A."/>
            <person name="Hamlin N."/>
            <person name="Harris D.E."/>
            <person name="Hidalgo J."/>
            <person name="Hodgson G."/>
            <person name="Holroyd S."/>
            <person name="Hornsby T."/>
            <person name="Howarth S."/>
            <person name="Huckle E.J."/>
            <person name="Hunt S."/>
            <person name="Jagels K."/>
            <person name="James K.D."/>
            <person name="Jones L."/>
            <person name="Jones M."/>
            <person name="Leather S."/>
            <person name="McDonald S."/>
            <person name="McLean J."/>
            <person name="Mooney P."/>
            <person name="Moule S."/>
            <person name="Mungall K.L."/>
            <person name="Murphy L.D."/>
            <person name="Niblett D."/>
            <person name="Odell C."/>
            <person name="Oliver K."/>
            <person name="O'Neil S."/>
            <person name="Pearson D."/>
            <person name="Quail M.A."/>
            <person name="Rabbinowitsch E."/>
            <person name="Rutherford K.M."/>
            <person name="Rutter S."/>
            <person name="Saunders D."/>
            <person name="Seeger K."/>
            <person name="Sharp S."/>
            <person name="Skelton J."/>
            <person name="Simmonds M.N."/>
            <person name="Squares R."/>
            <person name="Squares S."/>
            <person name="Stevens K."/>
            <person name="Taylor K."/>
            <person name="Taylor R.G."/>
            <person name="Tivey A."/>
            <person name="Walsh S.V."/>
            <person name="Warren T."/>
            <person name="Whitehead S."/>
            <person name="Woodward J.R."/>
            <person name="Volckaert G."/>
            <person name="Aert R."/>
            <person name="Robben J."/>
            <person name="Grymonprez B."/>
            <person name="Weltjens I."/>
            <person name="Vanstreels E."/>
            <person name="Rieger M."/>
            <person name="Schaefer M."/>
            <person name="Mueller-Auer S."/>
            <person name="Gabel C."/>
            <person name="Fuchs M."/>
            <person name="Duesterhoeft A."/>
            <person name="Fritzc C."/>
            <person name="Holzer E."/>
            <person name="Moestl D."/>
            <person name="Hilbert H."/>
            <person name="Borzym K."/>
            <person name="Langer I."/>
            <person name="Beck A."/>
            <person name="Lehrach H."/>
            <person name="Reinhardt R."/>
            <person name="Pohl T.M."/>
            <person name="Eger P."/>
            <person name="Zimmermann W."/>
            <person name="Wedler H."/>
            <person name="Wambutt R."/>
            <person name="Purnelle B."/>
            <person name="Goffeau A."/>
            <person name="Cadieu E."/>
            <person name="Dreano S."/>
            <person name="Gloux S."/>
            <person name="Lelaure V."/>
            <person name="Mottier S."/>
            <person name="Galibert F."/>
            <person name="Aves S.J."/>
            <person name="Xiang Z."/>
            <person name="Hunt C."/>
            <person name="Moore K."/>
            <person name="Hurst S.M."/>
            <person name="Lucas M."/>
            <person name="Rochet M."/>
            <person name="Gaillardin C."/>
            <person name="Tallada V.A."/>
            <person name="Garzon A."/>
            <person name="Thode G."/>
            <person name="Daga R.R."/>
            <person name="Cruzado L."/>
            <person name="Jimenez J."/>
            <person name="Sanchez M."/>
            <person name="del Rey F."/>
            <person name="Benito J."/>
            <person name="Dominguez A."/>
            <person name="Revuelta J.L."/>
            <person name="Moreno S."/>
            <person name="Armstrong J."/>
            <person name="Forsburg S.L."/>
            <person name="Cerutti L."/>
            <person name="Lowe T."/>
            <person name="McCombie W.R."/>
            <person name="Paulsen I."/>
            <person name="Potashkin J."/>
            <person name="Shpakovski G.V."/>
            <person name="Ussery D."/>
            <person name="Barrell B.G."/>
            <person name="Nurse P."/>
        </authorList>
    </citation>
    <scope>NUCLEOTIDE SEQUENCE [LARGE SCALE GENOMIC DNA]</scope>
    <source>
        <strain>972 / ATCC 24843</strain>
    </source>
</reference>
<reference key="2">
    <citation type="journal article" date="2011" name="Science">
        <title>Comparative functional genomics of the fission yeasts.</title>
        <authorList>
            <person name="Rhind N."/>
            <person name="Chen Z."/>
            <person name="Yassour M."/>
            <person name="Thompson D.A."/>
            <person name="Haas B.J."/>
            <person name="Habib N."/>
            <person name="Wapinski I."/>
            <person name="Roy S."/>
            <person name="Lin M.F."/>
            <person name="Heiman D.I."/>
            <person name="Young S.K."/>
            <person name="Furuya K."/>
            <person name="Guo Y."/>
            <person name="Pidoux A."/>
            <person name="Chen H.M."/>
            <person name="Robbertse B."/>
            <person name="Goldberg J.M."/>
            <person name="Aoki K."/>
            <person name="Bayne E.H."/>
            <person name="Berlin A.M."/>
            <person name="Desjardins C.A."/>
            <person name="Dobbs E."/>
            <person name="Dukaj L."/>
            <person name="Fan L."/>
            <person name="FitzGerald M.G."/>
            <person name="French C."/>
            <person name="Gujja S."/>
            <person name="Hansen K."/>
            <person name="Keifenheim D."/>
            <person name="Levin J.Z."/>
            <person name="Mosher R.A."/>
            <person name="Mueller C.A."/>
            <person name="Pfiffner J."/>
            <person name="Priest M."/>
            <person name="Russ C."/>
            <person name="Smialowska A."/>
            <person name="Swoboda P."/>
            <person name="Sykes S.M."/>
            <person name="Vaughn M."/>
            <person name="Vengrova S."/>
            <person name="Yoder R."/>
            <person name="Zeng Q."/>
            <person name="Allshire R."/>
            <person name="Baulcombe D."/>
            <person name="Birren B.W."/>
            <person name="Brown W."/>
            <person name="Ekwall K."/>
            <person name="Kellis M."/>
            <person name="Leatherwood J."/>
            <person name="Levin H."/>
            <person name="Margalit H."/>
            <person name="Martienssen R."/>
            <person name="Nieduszynski C.A."/>
            <person name="Spatafora J.W."/>
            <person name="Friedman N."/>
            <person name="Dalgaard J.Z."/>
            <person name="Baumann P."/>
            <person name="Niki H."/>
            <person name="Regev A."/>
            <person name="Nusbaum C."/>
        </authorList>
    </citation>
    <scope>REVISION OF GENE MODEL</scope>
</reference>
<reference key="3">
    <citation type="journal article" date="2003" name="Biochem. Biophys. Res. Commun.">
        <title>Identification of a SNARE protein required for vacuolar protein transport in Schizosaccharomyces pombe.</title>
        <authorList>
            <person name="Takegawa K."/>
            <person name="Hosomi A."/>
            <person name="Iwaki T."/>
            <person name="Fujita Y."/>
            <person name="Morita T."/>
            <person name="Tanaka N."/>
        </authorList>
    </citation>
    <scope>FUNCTION</scope>
</reference>
<reference key="4">
    <citation type="journal article" date="2006" name="Nat. Biotechnol.">
        <title>ORFeome cloning and global analysis of protein localization in the fission yeast Schizosaccharomyces pombe.</title>
        <authorList>
            <person name="Matsuyama A."/>
            <person name="Arai R."/>
            <person name="Yashiroda Y."/>
            <person name="Shirai A."/>
            <person name="Kamata A."/>
            <person name="Sekido S."/>
            <person name="Kobayashi Y."/>
            <person name="Hashimoto A."/>
            <person name="Hamamoto M."/>
            <person name="Hiraoka Y."/>
            <person name="Horinouchi S."/>
            <person name="Yoshida M."/>
        </authorList>
    </citation>
    <scope>SUBCELLULAR LOCATION [LARGE SCALE ANALYSIS]</scope>
</reference>
<reference key="5">
    <citation type="journal article" date="2008" name="J. Proteome Res.">
        <title>Phosphoproteome analysis of fission yeast.</title>
        <authorList>
            <person name="Wilson-Grady J.T."/>
            <person name="Villen J."/>
            <person name="Gygi S.P."/>
        </authorList>
    </citation>
    <scope>PHOSPHORYLATION [LARGE SCALE ANALYSIS] AT SER-148 AND SER-163</scope>
    <scope>IDENTIFICATION BY MASS SPECTROMETRY</scope>
</reference>
<name>PEP12_SCHPO</name>
<dbReference type="EMBL" id="CU329671">
    <property type="protein sequence ID" value="CAB39138.2"/>
    <property type="molecule type" value="Genomic_DNA"/>
</dbReference>
<dbReference type="PIR" id="T40201">
    <property type="entry name" value="T40201"/>
</dbReference>
<dbReference type="RefSeq" id="NP_595100.2">
    <property type="nucleotide sequence ID" value="NM_001021007.2"/>
</dbReference>
<dbReference type="SMR" id="O94651"/>
<dbReference type="BioGRID" id="276820">
    <property type="interactions" value="5"/>
</dbReference>
<dbReference type="FunCoup" id="O94651">
    <property type="interactions" value="284"/>
</dbReference>
<dbReference type="STRING" id="284812.O94651"/>
<dbReference type="iPTMnet" id="O94651"/>
<dbReference type="PaxDb" id="4896-SPBC31E1.04.1"/>
<dbReference type="EnsemblFungi" id="SPBC31E1.04.1">
    <property type="protein sequence ID" value="SPBC31E1.04.1:pep"/>
    <property type="gene ID" value="SPBC31E1.04"/>
</dbReference>
<dbReference type="GeneID" id="2540289"/>
<dbReference type="KEGG" id="spo:2540289"/>
<dbReference type="PomBase" id="SPBC31E1.04">
    <property type="gene designation" value="pep12"/>
</dbReference>
<dbReference type="VEuPathDB" id="FungiDB:SPBC31E1.04"/>
<dbReference type="eggNOG" id="KOG0811">
    <property type="taxonomic scope" value="Eukaryota"/>
</dbReference>
<dbReference type="HOGENOM" id="CLU_059257_2_0_1"/>
<dbReference type="InParanoid" id="O94651"/>
<dbReference type="OMA" id="RVHNTME"/>
<dbReference type="Reactome" id="R-SPO-204005">
    <property type="pathway name" value="COPII-mediated vesicle transport"/>
</dbReference>
<dbReference type="PRO" id="PR:O94651"/>
<dbReference type="Proteomes" id="UP000002485">
    <property type="component" value="Chromosome II"/>
</dbReference>
<dbReference type="GO" id="GO:0012505">
    <property type="term" value="C:endomembrane system"/>
    <property type="evidence" value="ECO:0000318"/>
    <property type="project" value="GO_Central"/>
</dbReference>
<dbReference type="GO" id="GO:0005783">
    <property type="term" value="C:endoplasmic reticulum"/>
    <property type="evidence" value="ECO:0007005"/>
    <property type="project" value="PomBase"/>
</dbReference>
<dbReference type="GO" id="GO:0000329">
    <property type="term" value="C:fungal-type vacuole membrane"/>
    <property type="evidence" value="ECO:0000314"/>
    <property type="project" value="PomBase"/>
</dbReference>
<dbReference type="GO" id="GO:0005794">
    <property type="term" value="C:Golgi apparatus"/>
    <property type="evidence" value="ECO:0000266"/>
    <property type="project" value="PomBase"/>
</dbReference>
<dbReference type="GO" id="GO:0005770">
    <property type="term" value="C:late endosome"/>
    <property type="evidence" value="ECO:0000314"/>
    <property type="project" value="PomBase"/>
</dbReference>
<dbReference type="GO" id="GO:0031201">
    <property type="term" value="C:SNARE complex"/>
    <property type="evidence" value="ECO:0000318"/>
    <property type="project" value="GO_Central"/>
</dbReference>
<dbReference type="GO" id="GO:0005484">
    <property type="term" value="F:SNAP receptor activity"/>
    <property type="evidence" value="ECO:0000318"/>
    <property type="project" value="GO_Central"/>
</dbReference>
<dbReference type="GO" id="GO:0000149">
    <property type="term" value="F:SNARE binding"/>
    <property type="evidence" value="ECO:0000318"/>
    <property type="project" value="GO_Central"/>
</dbReference>
<dbReference type="GO" id="GO:0006896">
    <property type="term" value="P:Golgi to vacuole transport"/>
    <property type="evidence" value="ECO:0000315"/>
    <property type="project" value="PomBase"/>
</dbReference>
<dbReference type="GO" id="GO:0006886">
    <property type="term" value="P:intracellular protein transport"/>
    <property type="evidence" value="ECO:0000318"/>
    <property type="project" value="GO_Central"/>
</dbReference>
<dbReference type="GO" id="GO:0048278">
    <property type="term" value="P:vesicle docking"/>
    <property type="evidence" value="ECO:0000318"/>
    <property type="project" value="GO_Central"/>
</dbReference>
<dbReference type="GO" id="GO:0006906">
    <property type="term" value="P:vesicle fusion"/>
    <property type="evidence" value="ECO:0000318"/>
    <property type="project" value="GO_Central"/>
</dbReference>
<dbReference type="CDD" id="cd15840">
    <property type="entry name" value="SNARE_Qa"/>
    <property type="match status" value="1"/>
</dbReference>
<dbReference type="FunFam" id="1.20.5.110:FF:000059">
    <property type="entry name" value="Related to syntaxin 12"/>
    <property type="match status" value="1"/>
</dbReference>
<dbReference type="Gene3D" id="1.20.5.110">
    <property type="match status" value="1"/>
</dbReference>
<dbReference type="Gene3D" id="1.20.58.70">
    <property type="match status" value="1"/>
</dbReference>
<dbReference type="InterPro" id="IPR010989">
    <property type="entry name" value="SNARE"/>
</dbReference>
<dbReference type="InterPro" id="IPR045242">
    <property type="entry name" value="Syntaxin"/>
</dbReference>
<dbReference type="InterPro" id="IPR006011">
    <property type="entry name" value="Syntaxin_N"/>
</dbReference>
<dbReference type="InterPro" id="IPR000727">
    <property type="entry name" value="T_SNARE_dom"/>
</dbReference>
<dbReference type="PANTHER" id="PTHR19957:SF38">
    <property type="entry name" value="LD27581P"/>
    <property type="match status" value="1"/>
</dbReference>
<dbReference type="PANTHER" id="PTHR19957">
    <property type="entry name" value="SYNTAXIN"/>
    <property type="match status" value="1"/>
</dbReference>
<dbReference type="Pfam" id="PF05739">
    <property type="entry name" value="SNARE"/>
    <property type="match status" value="1"/>
</dbReference>
<dbReference type="Pfam" id="PF14523">
    <property type="entry name" value="Syntaxin_2"/>
    <property type="match status" value="1"/>
</dbReference>
<dbReference type="SMART" id="SM00503">
    <property type="entry name" value="SynN"/>
    <property type="match status" value="1"/>
</dbReference>
<dbReference type="SMART" id="SM00397">
    <property type="entry name" value="t_SNARE"/>
    <property type="match status" value="1"/>
</dbReference>
<dbReference type="SUPFAM" id="SSF47661">
    <property type="entry name" value="t-snare proteins"/>
    <property type="match status" value="1"/>
</dbReference>
<dbReference type="PROSITE" id="PS50192">
    <property type="entry name" value="T_SNARE"/>
    <property type="match status" value="1"/>
</dbReference>
<accession>O94651</accession>
<proteinExistence type="evidence at protein level"/>